<comment type="function">
    <text evidence="1">Catalyzes the reversible reaction in which hydroxymethyl group from 5,10-methylenetetrahydrofolate is transferred onto alpha-ketoisovalerate to form ketopantoate.</text>
</comment>
<comment type="catalytic activity">
    <reaction evidence="1">
        <text>3-methyl-2-oxobutanoate + (6R)-5,10-methylene-5,6,7,8-tetrahydrofolate + H2O = 2-dehydropantoate + (6S)-5,6,7,8-tetrahydrofolate</text>
        <dbReference type="Rhea" id="RHEA:11824"/>
        <dbReference type="ChEBI" id="CHEBI:11561"/>
        <dbReference type="ChEBI" id="CHEBI:11851"/>
        <dbReference type="ChEBI" id="CHEBI:15377"/>
        <dbReference type="ChEBI" id="CHEBI:15636"/>
        <dbReference type="ChEBI" id="CHEBI:57453"/>
        <dbReference type="EC" id="2.1.2.11"/>
    </reaction>
</comment>
<comment type="cofactor">
    <cofactor evidence="1">
        <name>Mg(2+)</name>
        <dbReference type="ChEBI" id="CHEBI:18420"/>
    </cofactor>
    <text evidence="1">Binds 1 Mg(2+) ion per subunit.</text>
</comment>
<comment type="pathway">
    <text evidence="1">Cofactor biosynthesis; (R)-pantothenate biosynthesis; (R)-pantoate from 3-methyl-2-oxobutanoate: step 1/2.</text>
</comment>
<comment type="subunit">
    <text evidence="1">Homodecamer; pentamer of dimers.</text>
</comment>
<comment type="subcellular location">
    <subcellularLocation>
        <location evidence="1">Cytoplasm</location>
    </subcellularLocation>
</comment>
<comment type="similarity">
    <text evidence="1">Belongs to the PanB family.</text>
</comment>
<gene>
    <name evidence="1" type="primary">panB2</name>
    <name type="ordered locus">Bamb_5229</name>
</gene>
<proteinExistence type="inferred from homology"/>
<sequence length="284" mass="29849">MSAHTRITRKTVTAIRSTKGIGSLVSLTAYSAPMAKLVHDVADVIIVGDSVGMVLYGMPDTLRVTLDMMIAHGAAVVRGAAQACVVVDLPFSTFQESPAQAYRSAARLLAETGAQAVKLEGGCEMTDTIRFLTERGIPVMAHVGLMPQQANAAGGFRAQGMDPLSAAQVFDAACAAERAGAFSVVIEGTAEALARHLTGTLTIPTIGIGASPACDGQVLVTEDMIGAFDAYTPRFVKRYADANAVMRDAIRQYAHDVRHRVFPEPAHCFGYGKPLQLADAGATV</sequence>
<organism>
    <name type="scientific">Burkholderia ambifaria (strain ATCC BAA-244 / DSM 16087 / CCUG 44356 / LMG 19182 / AMMD)</name>
    <name type="common">Burkholderia cepacia (strain AMMD)</name>
    <dbReference type="NCBI Taxonomy" id="339670"/>
    <lineage>
        <taxon>Bacteria</taxon>
        <taxon>Pseudomonadati</taxon>
        <taxon>Pseudomonadota</taxon>
        <taxon>Betaproteobacteria</taxon>
        <taxon>Burkholderiales</taxon>
        <taxon>Burkholderiaceae</taxon>
        <taxon>Burkholderia</taxon>
        <taxon>Burkholderia cepacia complex</taxon>
    </lineage>
</organism>
<reference key="1">
    <citation type="submission" date="2006-08" db="EMBL/GenBank/DDBJ databases">
        <title>Complete sequence of chromosome 2 of Burkholderia cepacia AMMD.</title>
        <authorList>
            <person name="Copeland A."/>
            <person name="Lucas S."/>
            <person name="Lapidus A."/>
            <person name="Barry K."/>
            <person name="Detter J.C."/>
            <person name="Glavina del Rio T."/>
            <person name="Hammon N."/>
            <person name="Israni S."/>
            <person name="Pitluck S."/>
            <person name="Bruce D."/>
            <person name="Chain P."/>
            <person name="Malfatti S."/>
            <person name="Shin M."/>
            <person name="Vergez L."/>
            <person name="Schmutz J."/>
            <person name="Larimer F."/>
            <person name="Land M."/>
            <person name="Hauser L."/>
            <person name="Kyrpides N."/>
            <person name="Kim E."/>
            <person name="Parke J."/>
            <person name="Coenye T."/>
            <person name="Konstantinidis K."/>
            <person name="Ramette A."/>
            <person name="Tiedje J."/>
            <person name="Richardson P."/>
        </authorList>
    </citation>
    <scope>NUCLEOTIDE SEQUENCE [LARGE SCALE GENOMIC DNA]</scope>
    <source>
        <strain>ATCC BAA-244 / DSM 16087 / CCUG 44356 / LMG 19182 / AMMD</strain>
    </source>
</reference>
<name>PANB2_BURCM</name>
<dbReference type="EC" id="2.1.2.11" evidence="1"/>
<dbReference type="EMBL" id="CP000441">
    <property type="protein sequence ID" value="ABI90777.1"/>
    <property type="molecule type" value="Genomic_DNA"/>
</dbReference>
<dbReference type="RefSeq" id="WP_011660156.1">
    <property type="nucleotide sequence ID" value="NC_008391.1"/>
</dbReference>
<dbReference type="SMR" id="Q0B4Z6"/>
<dbReference type="GeneID" id="93088159"/>
<dbReference type="KEGG" id="bam:Bamb_5229"/>
<dbReference type="PATRIC" id="fig|339670.21.peg.5628"/>
<dbReference type="eggNOG" id="COG0413">
    <property type="taxonomic scope" value="Bacteria"/>
</dbReference>
<dbReference type="UniPathway" id="UPA00028">
    <property type="reaction ID" value="UER00003"/>
</dbReference>
<dbReference type="Proteomes" id="UP000000662">
    <property type="component" value="Chromosome 2"/>
</dbReference>
<dbReference type="GO" id="GO:0005737">
    <property type="term" value="C:cytoplasm"/>
    <property type="evidence" value="ECO:0007669"/>
    <property type="project" value="UniProtKB-SubCell"/>
</dbReference>
<dbReference type="GO" id="GO:0003864">
    <property type="term" value="F:3-methyl-2-oxobutanoate hydroxymethyltransferase activity"/>
    <property type="evidence" value="ECO:0007669"/>
    <property type="project" value="UniProtKB-UniRule"/>
</dbReference>
<dbReference type="GO" id="GO:0000287">
    <property type="term" value="F:magnesium ion binding"/>
    <property type="evidence" value="ECO:0007669"/>
    <property type="project" value="TreeGrafter"/>
</dbReference>
<dbReference type="GO" id="GO:0015940">
    <property type="term" value="P:pantothenate biosynthetic process"/>
    <property type="evidence" value="ECO:0007669"/>
    <property type="project" value="UniProtKB-UniRule"/>
</dbReference>
<dbReference type="CDD" id="cd06557">
    <property type="entry name" value="KPHMT-like"/>
    <property type="match status" value="1"/>
</dbReference>
<dbReference type="FunFam" id="3.20.20.60:FF:000003">
    <property type="entry name" value="3-methyl-2-oxobutanoate hydroxymethyltransferase"/>
    <property type="match status" value="1"/>
</dbReference>
<dbReference type="Gene3D" id="3.20.20.60">
    <property type="entry name" value="Phosphoenolpyruvate-binding domains"/>
    <property type="match status" value="1"/>
</dbReference>
<dbReference type="HAMAP" id="MF_00156">
    <property type="entry name" value="PanB"/>
    <property type="match status" value="1"/>
</dbReference>
<dbReference type="InterPro" id="IPR003700">
    <property type="entry name" value="Pantoate_hydroxy_MeTrfase"/>
</dbReference>
<dbReference type="InterPro" id="IPR015813">
    <property type="entry name" value="Pyrv/PenolPyrv_kinase-like_dom"/>
</dbReference>
<dbReference type="InterPro" id="IPR040442">
    <property type="entry name" value="Pyrv_kinase-like_dom_sf"/>
</dbReference>
<dbReference type="NCBIfam" id="TIGR00222">
    <property type="entry name" value="panB"/>
    <property type="match status" value="1"/>
</dbReference>
<dbReference type="NCBIfam" id="NF001452">
    <property type="entry name" value="PRK00311.1"/>
    <property type="match status" value="1"/>
</dbReference>
<dbReference type="PANTHER" id="PTHR20881">
    <property type="entry name" value="3-METHYL-2-OXOBUTANOATE HYDROXYMETHYLTRANSFERASE"/>
    <property type="match status" value="1"/>
</dbReference>
<dbReference type="PANTHER" id="PTHR20881:SF0">
    <property type="entry name" value="3-METHYL-2-OXOBUTANOATE HYDROXYMETHYLTRANSFERASE"/>
    <property type="match status" value="1"/>
</dbReference>
<dbReference type="Pfam" id="PF02548">
    <property type="entry name" value="Pantoate_transf"/>
    <property type="match status" value="1"/>
</dbReference>
<dbReference type="PIRSF" id="PIRSF000388">
    <property type="entry name" value="Pantoate_hydroxy_MeTrfase"/>
    <property type="match status" value="1"/>
</dbReference>
<dbReference type="SUPFAM" id="SSF51621">
    <property type="entry name" value="Phosphoenolpyruvate/pyruvate domain"/>
    <property type="match status" value="1"/>
</dbReference>
<keyword id="KW-0963">Cytoplasm</keyword>
<keyword id="KW-0460">Magnesium</keyword>
<keyword id="KW-0479">Metal-binding</keyword>
<keyword id="KW-0566">Pantothenate biosynthesis</keyword>
<keyword id="KW-0808">Transferase</keyword>
<feature type="chain" id="PRO_0000297232" description="3-methyl-2-oxobutanoate hydroxymethyltransferase 2">
    <location>
        <begin position="1"/>
        <end position="284"/>
    </location>
</feature>
<feature type="active site" description="Proton acceptor" evidence="1">
    <location>
        <position position="187"/>
    </location>
</feature>
<feature type="binding site" evidence="1">
    <location>
        <begin position="49"/>
        <end position="50"/>
    </location>
    <ligand>
        <name>3-methyl-2-oxobutanoate</name>
        <dbReference type="ChEBI" id="CHEBI:11851"/>
    </ligand>
</feature>
<feature type="binding site" evidence="1">
    <location>
        <position position="49"/>
    </location>
    <ligand>
        <name>Mg(2+)</name>
        <dbReference type="ChEBI" id="CHEBI:18420"/>
    </ligand>
</feature>
<feature type="binding site" evidence="1">
    <location>
        <position position="88"/>
    </location>
    <ligand>
        <name>3-methyl-2-oxobutanoate</name>
        <dbReference type="ChEBI" id="CHEBI:11851"/>
    </ligand>
</feature>
<feature type="binding site" evidence="1">
    <location>
        <position position="88"/>
    </location>
    <ligand>
        <name>Mg(2+)</name>
        <dbReference type="ChEBI" id="CHEBI:18420"/>
    </ligand>
</feature>
<feature type="binding site" evidence="1">
    <location>
        <position position="118"/>
    </location>
    <ligand>
        <name>3-methyl-2-oxobutanoate</name>
        <dbReference type="ChEBI" id="CHEBI:11851"/>
    </ligand>
</feature>
<feature type="binding site" evidence="1">
    <location>
        <position position="120"/>
    </location>
    <ligand>
        <name>Mg(2+)</name>
        <dbReference type="ChEBI" id="CHEBI:18420"/>
    </ligand>
</feature>
<accession>Q0B4Z6</accession>
<evidence type="ECO:0000255" key="1">
    <source>
        <dbReference type="HAMAP-Rule" id="MF_00156"/>
    </source>
</evidence>
<protein>
    <recommendedName>
        <fullName evidence="1">3-methyl-2-oxobutanoate hydroxymethyltransferase 2</fullName>
        <ecNumber evidence="1">2.1.2.11</ecNumber>
    </recommendedName>
    <alternativeName>
        <fullName evidence="1">Ketopantoate hydroxymethyltransferase 2</fullName>
        <shortName evidence="1">KPHMT 2</shortName>
    </alternativeName>
</protein>